<feature type="chain" id="PRO_1000094614" description="3-dehydroquinate synthase">
    <location>
        <begin position="1"/>
        <end position="359"/>
    </location>
</feature>
<feature type="binding site" evidence="1">
    <location>
        <begin position="71"/>
        <end position="76"/>
    </location>
    <ligand>
        <name>NAD(+)</name>
        <dbReference type="ChEBI" id="CHEBI:57540"/>
    </ligand>
</feature>
<feature type="binding site" evidence="1">
    <location>
        <begin position="105"/>
        <end position="109"/>
    </location>
    <ligand>
        <name>NAD(+)</name>
        <dbReference type="ChEBI" id="CHEBI:57540"/>
    </ligand>
</feature>
<feature type="binding site" evidence="1">
    <location>
        <begin position="129"/>
        <end position="130"/>
    </location>
    <ligand>
        <name>NAD(+)</name>
        <dbReference type="ChEBI" id="CHEBI:57540"/>
    </ligand>
</feature>
<feature type="binding site" evidence="1">
    <location>
        <position position="142"/>
    </location>
    <ligand>
        <name>NAD(+)</name>
        <dbReference type="ChEBI" id="CHEBI:57540"/>
    </ligand>
</feature>
<feature type="binding site" evidence="1">
    <location>
        <position position="151"/>
    </location>
    <ligand>
        <name>NAD(+)</name>
        <dbReference type="ChEBI" id="CHEBI:57540"/>
    </ligand>
</feature>
<feature type="binding site" evidence="1">
    <location>
        <begin position="169"/>
        <end position="172"/>
    </location>
    <ligand>
        <name>NAD(+)</name>
        <dbReference type="ChEBI" id="CHEBI:57540"/>
    </ligand>
</feature>
<feature type="binding site" evidence="1">
    <location>
        <position position="184"/>
    </location>
    <ligand>
        <name>Zn(2+)</name>
        <dbReference type="ChEBI" id="CHEBI:29105"/>
    </ligand>
</feature>
<feature type="binding site" evidence="1">
    <location>
        <position position="247"/>
    </location>
    <ligand>
        <name>Zn(2+)</name>
        <dbReference type="ChEBI" id="CHEBI:29105"/>
    </ligand>
</feature>
<feature type="binding site" evidence="1">
    <location>
        <position position="264"/>
    </location>
    <ligand>
        <name>Zn(2+)</name>
        <dbReference type="ChEBI" id="CHEBI:29105"/>
    </ligand>
</feature>
<dbReference type="EC" id="4.2.3.4" evidence="1"/>
<dbReference type="EMBL" id="CP000681">
    <property type="protein sequence ID" value="ABP77413.1"/>
    <property type="molecule type" value="Genomic_DNA"/>
</dbReference>
<dbReference type="SMR" id="A4YBT0"/>
<dbReference type="STRING" id="319224.Sputcn32_3705"/>
<dbReference type="KEGG" id="spc:Sputcn32_3705"/>
<dbReference type="eggNOG" id="COG0337">
    <property type="taxonomic scope" value="Bacteria"/>
</dbReference>
<dbReference type="HOGENOM" id="CLU_001201_0_2_6"/>
<dbReference type="UniPathway" id="UPA00053">
    <property type="reaction ID" value="UER00085"/>
</dbReference>
<dbReference type="GO" id="GO:0005737">
    <property type="term" value="C:cytoplasm"/>
    <property type="evidence" value="ECO:0007669"/>
    <property type="project" value="UniProtKB-SubCell"/>
</dbReference>
<dbReference type="GO" id="GO:0003856">
    <property type="term" value="F:3-dehydroquinate synthase activity"/>
    <property type="evidence" value="ECO:0007669"/>
    <property type="project" value="UniProtKB-UniRule"/>
</dbReference>
<dbReference type="GO" id="GO:0046872">
    <property type="term" value="F:metal ion binding"/>
    <property type="evidence" value="ECO:0007669"/>
    <property type="project" value="UniProtKB-KW"/>
</dbReference>
<dbReference type="GO" id="GO:0000166">
    <property type="term" value="F:nucleotide binding"/>
    <property type="evidence" value="ECO:0007669"/>
    <property type="project" value="UniProtKB-KW"/>
</dbReference>
<dbReference type="GO" id="GO:0008652">
    <property type="term" value="P:amino acid biosynthetic process"/>
    <property type="evidence" value="ECO:0007669"/>
    <property type="project" value="UniProtKB-KW"/>
</dbReference>
<dbReference type="GO" id="GO:0009073">
    <property type="term" value="P:aromatic amino acid family biosynthetic process"/>
    <property type="evidence" value="ECO:0007669"/>
    <property type="project" value="UniProtKB-KW"/>
</dbReference>
<dbReference type="GO" id="GO:0009423">
    <property type="term" value="P:chorismate biosynthetic process"/>
    <property type="evidence" value="ECO:0007669"/>
    <property type="project" value="UniProtKB-UniRule"/>
</dbReference>
<dbReference type="CDD" id="cd08195">
    <property type="entry name" value="DHQS"/>
    <property type="match status" value="1"/>
</dbReference>
<dbReference type="FunFam" id="1.20.1090.10:FF:000002">
    <property type="entry name" value="3-dehydroquinate synthase"/>
    <property type="match status" value="1"/>
</dbReference>
<dbReference type="FunFam" id="3.40.50.1970:FF:000001">
    <property type="entry name" value="3-dehydroquinate synthase"/>
    <property type="match status" value="1"/>
</dbReference>
<dbReference type="Gene3D" id="3.40.50.1970">
    <property type="match status" value="1"/>
</dbReference>
<dbReference type="Gene3D" id="1.20.1090.10">
    <property type="entry name" value="Dehydroquinate synthase-like - alpha domain"/>
    <property type="match status" value="1"/>
</dbReference>
<dbReference type="HAMAP" id="MF_00110">
    <property type="entry name" value="DHQ_synthase"/>
    <property type="match status" value="1"/>
</dbReference>
<dbReference type="InterPro" id="IPR050071">
    <property type="entry name" value="Dehydroquinate_synthase"/>
</dbReference>
<dbReference type="InterPro" id="IPR016037">
    <property type="entry name" value="DHQ_synth_AroB"/>
</dbReference>
<dbReference type="InterPro" id="IPR030963">
    <property type="entry name" value="DHQ_synth_fam"/>
</dbReference>
<dbReference type="InterPro" id="IPR030960">
    <property type="entry name" value="DHQS/DOIS_N"/>
</dbReference>
<dbReference type="InterPro" id="IPR056179">
    <property type="entry name" value="DHQS_C"/>
</dbReference>
<dbReference type="NCBIfam" id="TIGR01357">
    <property type="entry name" value="aroB"/>
    <property type="match status" value="1"/>
</dbReference>
<dbReference type="PANTHER" id="PTHR43622">
    <property type="entry name" value="3-DEHYDROQUINATE SYNTHASE"/>
    <property type="match status" value="1"/>
</dbReference>
<dbReference type="PANTHER" id="PTHR43622:SF7">
    <property type="entry name" value="3-DEHYDROQUINATE SYNTHASE, CHLOROPLASTIC"/>
    <property type="match status" value="1"/>
</dbReference>
<dbReference type="Pfam" id="PF01761">
    <property type="entry name" value="DHQ_synthase"/>
    <property type="match status" value="1"/>
</dbReference>
<dbReference type="Pfam" id="PF24621">
    <property type="entry name" value="DHQS_C"/>
    <property type="match status" value="1"/>
</dbReference>
<dbReference type="PIRSF" id="PIRSF001455">
    <property type="entry name" value="DHQ_synth"/>
    <property type="match status" value="1"/>
</dbReference>
<dbReference type="SUPFAM" id="SSF56796">
    <property type="entry name" value="Dehydroquinate synthase-like"/>
    <property type="match status" value="1"/>
</dbReference>
<evidence type="ECO:0000255" key="1">
    <source>
        <dbReference type="HAMAP-Rule" id="MF_00110"/>
    </source>
</evidence>
<protein>
    <recommendedName>
        <fullName evidence="1">3-dehydroquinate synthase</fullName>
        <shortName evidence="1">DHQS</shortName>
        <ecNumber evidence="1">4.2.3.4</ecNumber>
    </recommendedName>
</protein>
<sequence>MMKQIQVDLGERSYPIYIGQNLMNDSEALSRYLFKKRILIVTNETVAPLYLNQIQEVMVSFGEVESVILPDGEQFKDLTHLDAIFTALLQRNYGRDSVLVALGGGVIGDMTGFAAACYQRGIDFIQIPTTLLSQVDSSVGGKTAVNHPLGKNMIGAFYQPQLVLIDTQCLHTLPAREFAAGMAEVIKYGIMWDGEFFQWLENNVQALKRLETEALVYAISRCCEIKADVVSQDETEQGVRALLNLGHTFGHAIEAEMGYGNWLHGEAVAAGTVLAAQTARSLGLIDESIVCRIVQLLQAFDLPVSAPESMDFDSFIQHMRRDKKVLGGQIRLVLPTGIGQADVFSQVTESTLEQVICCA</sequence>
<proteinExistence type="inferred from homology"/>
<accession>A4YBT0</accession>
<comment type="function">
    <text evidence="1">Catalyzes the conversion of 3-deoxy-D-arabino-heptulosonate 7-phosphate (DAHP) to dehydroquinate (DHQ).</text>
</comment>
<comment type="catalytic activity">
    <reaction evidence="1">
        <text>7-phospho-2-dehydro-3-deoxy-D-arabino-heptonate = 3-dehydroquinate + phosphate</text>
        <dbReference type="Rhea" id="RHEA:21968"/>
        <dbReference type="ChEBI" id="CHEBI:32364"/>
        <dbReference type="ChEBI" id="CHEBI:43474"/>
        <dbReference type="ChEBI" id="CHEBI:58394"/>
        <dbReference type="EC" id="4.2.3.4"/>
    </reaction>
</comment>
<comment type="cofactor">
    <cofactor evidence="1">
        <name>Co(2+)</name>
        <dbReference type="ChEBI" id="CHEBI:48828"/>
    </cofactor>
    <cofactor evidence="1">
        <name>Zn(2+)</name>
        <dbReference type="ChEBI" id="CHEBI:29105"/>
    </cofactor>
    <text evidence="1">Binds 1 divalent metal cation per subunit. Can use either Co(2+) or Zn(2+).</text>
</comment>
<comment type="cofactor">
    <cofactor evidence="1">
        <name>NAD(+)</name>
        <dbReference type="ChEBI" id="CHEBI:57540"/>
    </cofactor>
</comment>
<comment type="pathway">
    <text evidence="1">Metabolic intermediate biosynthesis; chorismate biosynthesis; chorismate from D-erythrose 4-phosphate and phosphoenolpyruvate: step 2/7.</text>
</comment>
<comment type="subcellular location">
    <subcellularLocation>
        <location evidence="1">Cytoplasm</location>
    </subcellularLocation>
</comment>
<comment type="similarity">
    <text evidence="1">Belongs to the sugar phosphate cyclases superfamily. Dehydroquinate synthase family.</text>
</comment>
<name>AROB_SHEPC</name>
<reference key="1">
    <citation type="submission" date="2007-04" db="EMBL/GenBank/DDBJ databases">
        <title>Complete sequence of Shewanella putrefaciens CN-32.</title>
        <authorList>
            <consortium name="US DOE Joint Genome Institute"/>
            <person name="Copeland A."/>
            <person name="Lucas S."/>
            <person name="Lapidus A."/>
            <person name="Barry K."/>
            <person name="Detter J.C."/>
            <person name="Glavina del Rio T."/>
            <person name="Hammon N."/>
            <person name="Israni S."/>
            <person name="Dalin E."/>
            <person name="Tice H."/>
            <person name="Pitluck S."/>
            <person name="Chain P."/>
            <person name="Malfatti S."/>
            <person name="Shin M."/>
            <person name="Vergez L."/>
            <person name="Schmutz J."/>
            <person name="Larimer F."/>
            <person name="Land M."/>
            <person name="Hauser L."/>
            <person name="Kyrpides N."/>
            <person name="Mikhailova N."/>
            <person name="Romine M.F."/>
            <person name="Fredrickson J."/>
            <person name="Tiedje J."/>
            <person name="Richardson P."/>
        </authorList>
    </citation>
    <scope>NUCLEOTIDE SEQUENCE [LARGE SCALE GENOMIC DNA]</scope>
    <source>
        <strain>CN-32 / ATCC BAA-453</strain>
    </source>
</reference>
<gene>
    <name evidence="1" type="primary">aroB</name>
    <name type="ordered locus">Sputcn32_3705</name>
</gene>
<organism>
    <name type="scientific">Shewanella putrefaciens (strain CN-32 / ATCC BAA-453)</name>
    <dbReference type="NCBI Taxonomy" id="319224"/>
    <lineage>
        <taxon>Bacteria</taxon>
        <taxon>Pseudomonadati</taxon>
        <taxon>Pseudomonadota</taxon>
        <taxon>Gammaproteobacteria</taxon>
        <taxon>Alteromonadales</taxon>
        <taxon>Shewanellaceae</taxon>
        <taxon>Shewanella</taxon>
    </lineage>
</organism>
<keyword id="KW-0028">Amino-acid biosynthesis</keyword>
<keyword id="KW-0057">Aromatic amino acid biosynthesis</keyword>
<keyword id="KW-0170">Cobalt</keyword>
<keyword id="KW-0963">Cytoplasm</keyword>
<keyword id="KW-0456">Lyase</keyword>
<keyword id="KW-0479">Metal-binding</keyword>
<keyword id="KW-0520">NAD</keyword>
<keyword id="KW-0547">Nucleotide-binding</keyword>
<keyword id="KW-0862">Zinc</keyword>